<organism>
    <name type="scientific">Musca domestica</name>
    <name type="common">House fly</name>
    <dbReference type="NCBI Taxonomy" id="7370"/>
    <lineage>
        <taxon>Eukaryota</taxon>
        <taxon>Metazoa</taxon>
        <taxon>Ecdysozoa</taxon>
        <taxon>Arthropoda</taxon>
        <taxon>Hexapoda</taxon>
        <taxon>Insecta</taxon>
        <taxon>Pterygota</taxon>
        <taxon>Neoptera</taxon>
        <taxon>Endopterygota</taxon>
        <taxon>Diptera</taxon>
        <taxon>Brachycera</taxon>
        <taxon>Muscomorpha</taxon>
        <taxon>Muscoidea</taxon>
        <taxon>Muscidae</taxon>
        <taxon>Musca</taxon>
    </lineage>
</organism>
<keyword id="KW-1185">Reference proteome</keyword>
<keyword id="KW-0808">Transferase</keyword>
<accession>P46431</accession>
<evidence type="ECO:0000250" key="1"/>
<evidence type="ECO:0000305" key="2"/>
<gene>
    <name type="primary">Gst2</name>
    <name type="synonym">Gst-2</name>
</gene>
<name>GSTT2_MUSDO</name>
<dbReference type="EC" id="2.5.1.18"/>
<dbReference type="EMBL" id="X73574">
    <property type="protein sequence ID" value="CAA51976.1"/>
    <property type="molecule type" value="mRNA"/>
</dbReference>
<dbReference type="PIR" id="S70851">
    <property type="entry name" value="S70851"/>
</dbReference>
<dbReference type="RefSeq" id="NP_001295926.1">
    <property type="nucleotide sequence ID" value="NM_001308997.1"/>
</dbReference>
<dbReference type="SMR" id="P46431"/>
<dbReference type="STRING" id="7370.P46431"/>
<dbReference type="GeneID" id="101897277"/>
<dbReference type="KEGG" id="mde:101897277"/>
<dbReference type="VEuPathDB" id="VectorBase:MDOA011215"/>
<dbReference type="VEuPathDB" id="VectorBase:MDOMA2_005932"/>
<dbReference type="eggNOG" id="KOG0867">
    <property type="taxonomic scope" value="Eukaryota"/>
</dbReference>
<dbReference type="OrthoDB" id="2309723at2759"/>
<dbReference type="Proteomes" id="UP000694905">
    <property type="component" value="Unplaced"/>
</dbReference>
<dbReference type="GO" id="GO:0004364">
    <property type="term" value="F:glutathione transferase activity"/>
    <property type="evidence" value="ECO:0007669"/>
    <property type="project" value="UniProtKB-EC"/>
</dbReference>
<dbReference type="GO" id="GO:0006749">
    <property type="term" value="P:glutathione metabolic process"/>
    <property type="evidence" value="ECO:0007669"/>
    <property type="project" value="TreeGrafter"/>
</dbReference>
<dbReference type="CDD" id="cd03177">
    <property type="entry name" value="GST_C_Delta_Epsilon"/>
    <property type="match status" value="1"/>
</dbReference>
<dbReference type="CDD" id="cd03045">
    <property type="entry name" value="GST_N_Delta_Epsilon"/>
    <property type="match status" value="1"/>
</dbReference>
<dbReference type="FunFam" id="3.40.30.10:FF:000034">
    <property type="entry name" value="glutathione S-transferase 1"/>
    <property type="match status" value="1"/>
</dbReference>
<dbReference type="FunFam" id="1.20.1050.10:FF:000007">
    <property type="entry name" value="Glutathione S-transferase 1-1"/>
    <property type="match status" value="1"/>
</dbReference>
<dbReference type="Gene3D" id="1.20.1050.10">
    <property type="match status" value="1"/>
</dbReference>
<dbReference type="Gene3D" id="3.40.30.10">
    <property type="entry name" value="Glutaredoxin"/>
    <property type="match status" value="1"/>
</dbReference>
<dbReference type="InterPro" id="IPR010987">
    <property type="entry name" value="Glutathione-S-Trfase_C-like"/>
</dbReference>
<dbReference type="InterPro" id="IPR036282">
    <property type="entry name" value="Glutathione-S-Trfase_C_sf"/>
</dbReference>
<dbReference type="InterPro" id="IPR004045">
    <property type="entry name" value="Glutathione_S-Trfase_N"/>
</dbReference>
<dbReference type="InterPro" id="IPR004046">
    <property type="entry name" value="GST_C"/>
</dbReference>
<dbReference type="InterPro" id="IPR036249">
    <property type="entry name" value="Thioredoxin-like_sf"/>
</dbReference>
<dbReference type="PANTHER" id="PTHR43969">
    <property type="entry name" value="GLUTATHIONE S TRANSFERASE D10, ISOFORM A-RELATED"/>
    <property type="match status" value="1"/>
</dbReference>
<dbReference type="PANTHER" id="PTHR43969:SF9">
    <property type="entry name" value="GLUTATHIONE S TRANSFERASE D10, ISOFORM A-RELATED"/>
    <property type="match status" value="1"/>
</dbReference>
<dbReference type="Pfam" id="PF00043">
    <property type="entry name" value="GST_C"/>
    <property type="match status" value="1"/>
</dbReference>
<dbReference type="Pfam" id="PF13417">
    <property type="entry name" value="GST_N_3"/>
    <property type="match status" value="1"/>
</dbReference>
<dbReference type="SFLD" id="SFLDG01153">
    <property type="entry name" value="Main.4:_Theta-like"/>
    <property type="match status" value="1"/>
</dbReference>
<dbReference type="SFLD" id="SFLDG00358">
    <property type="entry name" value="Main_(cytGST)"/>
    <property type="match status" value="1"/>
</dbReference>
<dbReference type="SUPFAM" id="SSF47616">
    <property type="entry name" value="GST C-terminal domain-like"/>
    <property type="match status" value="1"/>
</dbReference>
<dbReference type="SUPFAM" id="SSF52833">
    <property type="entry name" value="Thioredoxin-like"/>
    <property type="match status" value="1"/>
</dbReference>
<dbReference type="PROSITE" id="PS50405">
    <property type="entry name" value="GST_CTER"/>
    <property type="match status" value="1"/>
</dbReference>
<dbReference type="PROSITE" id="PS50404">
    <property type="entry name" value="GST_NTER"/>
    <property type="match status" value="1"/>
</dbReference>
<reference key="1">
    <citation type="journal article" date="1994" name="Mol. Gen. Genet.">
        <title>Glutathione transferase gene family from the housefly Musca domestica.</title>
        <authorList>
            <person name="Syvanen M."/>
            <person name="Zhou Z."/>
            <person name="Wang J."/>
        </authorList>
    </citation>
    <scope>NUCLEOTIDE SEQUENCE [MRNA]</scope>
    <source>
        <strain>Cornell-R</strain>
    </source>
</reference>
<reference key="2">
    <citation type="submission" date="1995-12" db="EMBL/GenBank/DDBJ databases">
        <authorList>
            <person name="Syvanen M."/>
        </authorList>
    </citation>
    <scope>SEQUENCE REVISION</scope>
</reference>
<comment type="function">
    <text>Conjugation of reduced glutathione to a wide number of exogenous and endogenous hydrophobic electrophiles.</text>
</comment>
<comment type="catalytic activity">
    <reaction>
        <text>RX + glutathione = an S-substituted glutathione + a halide anion + H(+)</text>
        <dbReference type="Rhea" id="RHEA:16437"/>
        <dbReference type="ChEBI" id="CHEBI:15378"/>
        <dbReference type="ChEBI" id="CHEBI:16042"/>
        <dbReference type="ChEBI" id="CHEBI:17792"/>
        <dbReference type="ChEBI" id="CHEBI:57925"/>
        <dbReference type="ChEBI" id="CHEBI:90779"/>
        <dbReference type="EC" id="2.5.1.18"/>
    </reaction>
</comment>
<comment type="subunit">
    <text evidence="1">Homodimer.</text>
</comment>
<comment type="similarity">
    <text evidence="2">Belongs to the GST superfamily. Theta family.</text>
</comment>
<sequence length="210" mass="24344">MDFYYLPLSAPCRSVIMTAKALGIELNKKLLNLFEGEHLKPEFLKINPQHTIPTLVDNGFAMWESRAIMVYLVEKYGKQNDPLYPSCPKKRALINQRLYFDMGTLWKSYADYTYPQFRENKPADPELFKKFESALEFLNIFLSQSKYAAGETMTLADLAILASVSTFDVVQMDLSKYEHILRWYNMLKDTAPGAAENWAGCLEMKKYFKK</sequence>
<feature type="chain" id="PRO_0000185966" description="Glutathione S-transferase 2">
    <location>
        <begin position="1"/>
        <end position="210"/>
    </location>
</feature>
<feature type="domain" description="GST N-terminal">
    <location>
        <begin position="1"/>
        <end position="80"/>
    </location>
</feature>
<feature type="domain" description="GST C-terminal">
    <location>
        <begin position="87"/>
        <end position="208"/>
    </location>
</feature>
<feature type="binding site" evidence="1">
    <location>
        <position position="9"/>
    </location>
    <ligand>
        <name>glutathione</name>
        <dbReference type="ChEBI" id="CHEBI:57925"/>
    </ligand>
</feature>
<feature type="binding site" evidence="1">
    <location>
        <begin position="50"/>
        <end position="52"/>
    </location>
    <ligand>
        <name>glutathione</name>
        <dbReference type="ChEBI" id="CHEBI:57925"/>
    </ligand>
</feature>
<feature type="binding site" evidence="1">
    <location>
        <begin position="64"/>
        <end position="66"/>
    </location>
    <ligand>
        <name>glutathione</name>
        <dbReference type="ChEBI" id="CHEBI:57925"/>
    </ligand>
</feature>
<proteinExistence type="evidence at transcript level"/>
<protein>
    <recommendedName>
        <fullName>Glutathione S-transferase 2</fullName>
        <ecNumber>2.5.1.18</ecNumber>
    </recommendedName>
    <alternativeName>
        <fullName>GST class-theta</fullName>
    </alternativeName>
</protein>